<gene>
    <name evidence="6" type="primary">ORFZ</name>
    <name type="ORF">MGG_08390</name>
</gene>
<evidence type="ECO:0000250" key="1">
    <source>
        <dbReference type="UniProtKB" id="Q4WZB3"/>
    </source>
</evidence>
<evidence type="ECO:0000250" key="2">
    <source>
        <dbReference type="UniProtKB" id="Q93NG6"/>
    </source>
</evidence>
<evidence type="ECO:0000269" key="3">
    <source>
    </source>
</evidence>
<evidence type="ECO:0000269" key="4">
    <source>
    </source>
</evidence>
<evidence type="ECO:0000269" key="5">
    <source>
    </source>
</evidence>
<evidence type="ECO:0000303" key="6">
    <source>
    </source>
</evidence>
<evidence type="ECO:0000303" key="7">
    <source>
    </source>
</evidence>
<evidence type="ECO:0000305" key="8"/>
<evidence type="ECO:0000305" key="9">
    <source>
    </source>
</evidence>
<evidence type="ECO:0000305" key="10">
    <source>
    </source>
</evidence>
<keyword id="KW-0378">Hydrolase</keyword>
<keyword id="KW-1185">Reference proteome</keyword>
<organism>
    <name type="scientific">Pyricularia oryzae (strain 70-15 / ATCC MYA-4617 / FGSC 8958)</name>
    <name type="common">Rice blast fungus</name>
    <name type="synonym">Magnaporthe oryzae</name>
    <dbReference type="NCBI Taxonomy" id="242507"/>
    <lineage>
        <taxon>Eukaryota</taxon>
        <taxon>Fungi</taxon>
        <taxon>Dikarya</taxon>
        <taxon>Ascomycota</taxon>
        <taxon>Pezizomycotina</taxon>
        <taxon>Sordariomycetes</taxon>
        <taxon>Sordariomycetidae</taxon>
        <taxon>Magnaporthales</taxon>
        <taxon>Pyriculariaceae</taxon>
        <taxon>Pyricularia</taxon>
    </lineage>
</organism>
<name>ORFZB_PYRO7</name>
<accession>G4MVZ4</accession>
<sequence length="424" mass="46951">MHHFFKGQFFDFETCRILGTAVYGGADVAEVLEAVGQIRDGDPVSWGRAWAIQAERALVLAEEACKSGDRTAARDAYLRGSNYTRASGYMLTGEGPNRPDPRSREIVERVQAIFRKAAALFDHPVQFLKIPFEGGLKLPCTLYLPPPDRRLPGKIPILISGGGADALQEELYYMHPSAGPDLGYAVLTFEGPGQGVMLRKHDAKMRPDWEAVAGAVIDFLEELARSQPDLDLDTSRIAFSGCSLGGYFALRAAADPRVKACVSLDPLYSFWDFAMEHVSPTFINAWEAGWLKDGAVDAVVRMMMAMSFQMRWELSIAGTFFGQTSPARIMKEMKKFSLAGGQLRRVQCPVLVSGASHSLYLEGNHHTMRIYNELVNHTKGDKQLWLTATPGQGSLQAKMGALRLANQKTFKFLDEHFGIERPQL</sequence>
<comment type="function">
    <text evidence="3 4 5 9 10">Hydrolyase; part of the gene cluster that mediates the biosynthesis of a tyrosine-derived cytochalasan acting as a fungal signal recognized by resistant rice plants and leads to avirulence in Pi33 resistant rice cultivars (PubMed:18433432). The first step in the pathway is catalyzed by the hybrid PKS-NRPS ACE1, assisted by the enoyl reductase RAP1, that are responsible for fusion of the tyrosine precursor and the polyketide backbone (PubMed:29142718). The polyketide synthase module (PKS) of ACE1 is responsible for the synthesis of the polyketide backbone and the downstream nonribosomal peptide synthetase (NRPS) amidates the carboxyl end of the polyketide with the tyrosine precursor (PubMed:29142718). Because ACE1 lacks a designated enoylreductase (ER) domain, the required activity is provided the enoyl reductase RAP1 (PubMed:29142718). Reduction by the hydrolyase ORFZ, followed by dehydration and intra-molecular Diels-Alder cyclization by the Diels-Alderase ORF3 then yield the required isoindolone-fused macrocycle (Probable). A number of oxidative steps catalyzed by the tailoring enzymes identified within the cluster, including cytochrome P450 monooxygenases CYP1 to CYP4, the FAD-linked oxidoreductase OXR2 and the short-chain dehydrogenase/reductase OXR1, are further required to afford the final cytochalasans that confer avirulence and which have still to be identified (Probable). The monooxygenase CYP1 has been shown to be a site-selective C-18 hydroxylase whereas the function of CYP3 is the site-selective epoxidation of the C-6/C-7 olefin that is present in some intermediate compounds (PubMed:31644300). Finally, SYN2 and RAP2 are not required for avirulence in Pi33 resistant rice cultivars (PubMed:18433432).</text>
</comment>
<comment type="pathway">
    <text evidence="9">Secondary metabolite biosynthesis.</text>
</comment>
<comment type="subunit">
    <text evidence="2">Homodimer.</text>
</comment>
<comment type="induction">
    <text evidence="3">Expressed exclusively during fungal penetration of host leaves, the time point at which plant defense reactions are triggered.</text>
</comment>
<comment type="similarity">
    <text evidence="8">Belongs to the AB hydrolase superfamily. FUS2 hydrolase family.</text>
</comment>
<feature type="chain" id="PRO_0000449473" description="Hydrolase ORFZ">
    <location>
        <begin position="1"/>
        <end position="424"/>
    </location>
</feature>
<feature type="active site" description="Nucleophile" evidence="1">
    <location>
        <position position="243"/>
    </location>
</feature>
<protein>
    <recommendedName>
        <fullName evidence="6">Hydrolase ORFZ</fullName>
        <ecNumber evidence="9">3.7.1.-</ecNumber>
    </recommendedName>
    <alternativeName>
        <fullName evidence="7">ACE1 cytochalasan biosynthesis cluster protein ORFZ</fullName>
    </alternativeName>
</protein>
<dbReference type="EC" id="3.7.1.-" evidence="9"/>
<dbReference type="EMBL" id="CM001232">
    <property type="protein sequence ID" value="EHA55862.1"/>
    <property type="molecule type" value="Genomic_DNA"/>
</dbReference>
<dbReference type="RefSeq" id="XP_003715669.1">
    <property type="nucleotide sequence ID" value="XM_003715621.1"/>
</dbReference>
<dbReference type="SMR" id="G4MVZ4"/>
<dbReference type="ESTHER" id="mago7-ORFZB">
    <property type="family name" value="Duf_1100-S"/>
</dbReference>
<dbReference type="EnsemblFungi" id="MGG_08390T0">
    <property type="protein sequence ID" value="MGG_08390T0"/>
    <property type="gene ID" value="MGG_08390"/>
</dbReference>
<dbReference type="GeneID" id="2678521"/>
<dbReference type="KEGG" id="mgr:MGG_08390"/>
<dbReference type="VEuPathDB" id="FungiDB:MGG_08390"/>
<dbReference type="eggNOG" id="ENOG502QPTG">
    <property type="taxonomic scope" value="Eukaryota"/>
</dbReference>
<dbReference type="HOGENOM" id="CLU_034451_0_0_1"/>
<dbReference type="InParanoid" id="G4MVZ4"/>
<dbReference type="OMA" id="FQMRWEV"/>
<dbReference type="OrthoDB" id="249703at2759"/>
<dbReference type="Proteomes" id="UP000009058">
    <property type="component" value="Chromosome 2"/>
</dbReference>
<dbReference type="GO" id="GO:0016787">
    <property type="term" value="F:hydrolase activity"/>
    <property type="evidence" value="ECO:0007669"/>
    <property type="project" value="UniProtKB-KW"/>
</dbReference>
<dbReference type="Gene3D" id="1.20.1440.110">
    <property type="entry name" value="acylaminoacyl peptidase"/>
    <property type="match status" value="1"/>
</dbReference>
<dbReference type="Gene3D" id="3.40.50.1820">
    <property type="entry name" value="alpha/beta hydrolase"/>
    <property type="match status" value="1"/>
</dbReference>
<dbReference type="InterPro" id="IPR000073">
    <property type="entry name" value="AB_hydrolase_1"/>
</dbReference>
<dbReference type="InterPro" id="IPR029058">
    <property type="entry name" value="AB_hydrolase_fold"/>
</dbReference>
<dbReference type="InterPro" id="IPR050261">
    <property type="entry name" value="FrsA_esterase"/>
</dbReference>
<dbReference type="PANTHER" id="PTHR22946:SF13">
    <property type="entry name" value="ALPHA_BETA HYDROLASE PSOB"/>
    <property type="match status" value="1"/>
</dbReference>
<dbReference type="PANTHER" id="PTHR22946">
    <property type="entry name" value="DIENELACTONE HYDROLASE DOMAIN-CONTAINING PROTEIN-RELATED"/>
    <property type="match status" value="1"/>
</dbReference>
<dbReference type="Pfam" id="PF12697">
    <property type="entry name" value="Abhydrolase_6"/>
    <property type="match status" value="1"/>
</dbReference>
<dbReference type="SUPFAM" id="SSF53474">
    <property type="entry name" value="alpha/beta-Hydrolases"/>
    <property type="match status" value="1"/>
</dbReference>
<reference key="1">
    <citation type="journal article" date="2005" name="Nature">
        <title>The genome sequence of the rice blast fungus Magnaporthe grisea.</title>
        <authorList>
            <person name="Dean R.A."/>
            <person name="Talbot N.J."/>
            <person name="Ebbole D.J."/>
            <person name="Farman M.L."/>
            <person name="Mitchell T.K."/>
            <person name="Orbach M.J."/>
            <person name="Thon M.R."/>
            <person name="Kulkarni R."/>
            <person name="Xu J.-R."/>
            <person name="Pan H."/>
            <person name="Read N.D."/>
            <person name="Lee Y.-H."/>
            <person name="Carbone I."/>
            <person name="Brown D."/>
            <person name="Oh Y.Y."/>
            <person name="Donofrio N."/>
            <person name="Jeong J.S."/>
            <person name="Soanes D.M."/>
            <person name="Djonovic S."/>
            <person name="Kolomiets E."/>
            <person name="Rehmeyer C."/>
            <person name="Li W."/>
            <person name="Harding M."/>
            <person name="Kim S."/>
            <person name="Lebrun M.-H."/>
            <person name="Bohnert H."/>
            <person name="Coughlan S."/>
            <person name="Butler J."/>
            <person name="Calvo S.E."/>
            <person name="Ma L.-J."/>
            <person name="Nicol R."/>
            <person name="Purcell S."/>
            <person name="Nusbaum C."/>
            <person name="Galagan J.E."/>
            <person name="Birren B.W."/>
        </authorList>
    </citation>
    <scope>NUCLEOTIDE SEQUENCE [LARGE SCALE GENOMIC DNA]</scope>
    <source>
        <strain>70-15 / ATCC MYA-4617 / FGSC 8958</strain>
    </source>
</reference>
<reference key="2">
    <citation type="journal article" date="2008" name="New Phytol.">
        <title>Magnaporthe grisea avirulence gene ACE1 belongs to an infection-specific gene cluster involved in secondary metabolism.</title>
        <authorList>
            <person name="Collemare J."/>
            <person name="Pianfetti M."/>
            <person name="Houlle A.E."/>
            <person name="Morin D."/>
            <person name="Camborde L."/>
            <person name="Gagey M.J."/>
            <person name="Barbisan C."/>
            <person name="Fudal I."/>
            <person name="Lebrun M.H."/>
            <person name="Boehnert H.U."/>
        </authorList>
    </citation>
    <scope>FUNCTION</scope>
    <scope>INDUCTION</scope>
    <scope>PATHWAY</scope>
</reference>
<reference key="3">
    <citation type="journal article" date="2015" name="Chem. Sci.">
        <title>Heterologous expression of the avirulence gene ACE1 from the fungal rice pathogen Magnaporthe oryzae.</title>
        <authorList>
            <person name="Song Z."/>
            <person name="Bakeer W."/>
            <person name="Marshall J.W."/>
            <person name="Yakasai A.A."/>
            <person name="Khalid R.M."/>
            <person name="Collemare J."/>
            <person name="Skellam E."/>
            <person name="Tharreau D."/>
            <person name="Lebrun M.H."/>
            <person name="Lazarus C.M."/>
            <person name="Bailey A.M."/>
            <person name="Simpson T.J."/>
            <person name="Cox R.J."/>
        </authorList>
    </citation>
    <scope>FUNCTION</scope>
</reference>
<reference key="4">
    <citation type="journal article" date="2019" name="Org. Lett.">
        <title>Investigating the function of cryptic cytochalasan cytochrome P450 monooxygenases using combinatorial biosynthesis.</title>
        <authorList>
            <person name="Wang C."/>
            <person name="Becker K."/>
            <person name="Pfuetze S."/>
            <person name="Kuhnert E."/>
            <person name="Stadler M."/>
            <person name="Cox R.J."/>
            <person name="Skellam E."/>
        </authorList>
    </citation>
    <scope>FUNCTION</scope>
</reference>
<proteinExistence type="evidence at transcript level"/>